<keyword id="KW-0067">ATP-binding</keyword>
<keyword id="KW-0963">Cytoplasm</keyword>
<keyword id="KW-0256">Endoplasmic reticulum</keyword>
<keyword id="KW-0378">Hydrolase</keyword>
<keyword id="KW-0479">Metal-binding</keyword>
<keyword id="KW-0547">Nucleotide-binding</keyword>
<keyword id="KW-1185">Reference proteome</keyword>
<keyword id="KW-0813">Transport</keyword>
<keyword id="KW-0862">Zinc</keyword>
<accession>Q8T662</accession>
<accession>Q54BG0</accession>
<name>ASNA_DICDI</name>
<proteinExistence type="evidence at protein level"/>
<dbReference type="EC" id="3.6.-.-" evidence="1"/>
<dbReference type="EMBL" id="AF482963">
    <property type="protein sequence ID" value="AAL96261.1"/>
    <property type="molecule type" value="Genomic_DNA"/>
</dbReference>
<dbReference type="EMBL" id="AAFI02000218">
    <property type="protein sequence ID" value="EAL60576.1"/>
    <property type="molecule type" value="Genomic_DNA"/>
</dbReference>
<dbReference type="RefSeq" id="XP_629069.1">
    <property type="nucleotide sequence ID" value="XM_629067.1"/>
</dbReference>
<dbReference type="SMR" id="Q8T662"/>
<dbReference type="FunCoup" id="Q8T662">
    <property type="interactions" value="930"/>
</dbReference>
<dbReference type="STRING" id="44689.Q8T662"/>
<dbReference type="GlyGen" id="Q8T662">
    <property type="glycosylation" value="1 site"/>
</dbReference>
<dbReference type="PaxDb" id="44689-DDB0215362"/>
<dbReference type="EnsemblProtists" id="EAL60576">
    <property type="protein sequence ID" value="EAL60576"/>
    <property type="gene ID" value="DDB_G0293528"/>
</dbReference>
<dbReference type="GeneID" id="8629361"/>
<dbReference type="KEGG" id="ddi:DDB_G0293528"/>
<dbReference type="dictyBase" id="DDB_G0293528">
    <property type="gene designation" value="arsA"/>
</dbReference>
<dbReference type="VEuPathDB" id="AmoebaDB:DDB_G0293528"/>
<dbReference type="eggNOG" id="KOG2825">
    <property type="taxonomic scope" value="Eukaryota"/>
</dbReference>
<dbReference type="HOGENOM" id="CLU_040761_0_0_1"/>
<dbReference type="InParanoid" id="Q8T662"/>
<dbReference type="OMA" id="MDAPYEF"/>
<dbReference type="PhylomeDB" id="Q8T662"/>
<dbReference type="PRO" id="PR:Q8T662"/>
<dbReference type="Proteomes" id="UP000002195">
    <property type="component" value="Chromosome 6"/>
</dbReference>
<dbReference type="GO" id="GO:0043529">
    <property type="term" value="C:GET complex"/>
    <property type="evidence" value="ECO:0000318"/>
    <property type="project" value="GO_Central"/>
</dbReference>
<dbReference type="GO" id="GO:0045335">
    <property type="term" value="C:phagocytic vesicle"/>
    <property type="evidence" value="ECO:0007005"/>
    <property type="project" value="dictyBase"/>
</dbReference>
<dbReference type="GO" id="GO:0005524">
    <property type="term" value="F:ATP binding"/>
    <property type="evidence" value="ECO:0000317"/>
    <property type="project" value="dictyBase"/>
</dbReference>
<dbReference type="GO" id="GO:0016887">
    <property type="term" value="F:ATP hydrolysis activity"/>
    <property type="evidence" value="ECO:0000318"/>
    <property type="project" value="GO_Central"/>
</dbReference>
<dbReference type="GO" id="GO:0046872">
    <property type="term" value="F:metal ion binding"/>
    <property type="evidence" value="ECO:0007669"/>
    <property type="project" value="UniProtKB-KW"/>
</dbReference>
<dbReference type="GO" id="GO:0071816">
    <property type="term" value="P:tail-anchored membrane protein insertion into ER membrane"/>
    <property type="evidence" value="ECO:0000318"/>
    <property type="project" value="GO_Central"/>
</dbReference>
<dbReference type="CDD" id="cd02035">
    <property type="entry name" value="ArsA"/>
    <property type="match status" value="1"/>
</dbReference>
<dbReference type="FunFam" id="3.40.50.300:FF:000235">
    <property type="entry name" value="ATPase ASNA1"/>
    <property type="match status" value="1"/>
</dbReference>
<dbReference type="Gene3D" id="3.40.50.300">
    <property type="entry name" value="P-loop containing nucleotide triphosphate hydrolases"/>
    <property type="match status" value="1"/>
</dbReference>
<dbReference type="HAMAP" id="MF_03112">
    <property type="entry name" value="Asna1_Get3"/>
    <property type="match status" value="1"/>
</dbReference>
<dbReference type="InterPro" id="IPR025723">
    <property type="entry name" value="Anion-transp_ATPase-like_dom"/>
</dbReference>
<dbReference type="InterPro" id="IPR016300">
    <property type="entry name" value="ATPase_ArsA/GET3"/>
</dbReference>
<dbReference type="InterPro" id="IPR027542">
    <property type="entry name" value="ATPase_ArsA/GET3_euk"/>
</dbReference>
<dbReference type="InterPro" id="IPR027417">
    <property type="entry name" value="P-loop_NTPase"/>
</dbReference>
<dbReference type="NCBIfam" id="TIGR00345">
    <property type="entry name" value="GET3_arsA_TRC40"/>
    <property type="match status" value="1"/>
</dbReference>
<dbReference type="PANTHER" id="PTHR10803">
    <property type="entry name" value="ARSENICAL PUMP-DRIVING ATPASE ARSENITE-TRANSLOCATING ATPASE"/>
    <property type="match status" value="1"/>
</dbReference>
<dbReference type="PANTHER" id="PTHR10803:SF3">
    <property type="entry name" value="ATPASE GET3"/>
    <property type="match status" value="1"/>
</dbReference>
<dbReference type="Pfam" id="PF02374">
    <property type="entry name" value="ArsA_ATPase"/>
    <property type="match status" value="1"/>
</dbReference>
<dbReference type="SUPFAM" id="SSF52540">
    <property type="entry name" value="P-loop containing nucleoside triphosphate hydrolases"/>
    <property type="match status" value="1"/>
</dbReference>
<sequence>MADDEFEPTIENIINSEKLKWIFVGGKGGVGKTTTSCSVAIQLSKVKESVLLISTDPAHNLSDAFGQKFTKSPTLVEGFTNLFAMEIDPTPDQLAPEFMETQSDGFNLQEFTAAIPGIDEAMSFAEVMKLVKSLEFSVVVFDTAPTGHTLRLLSIPSLLDKGINKFLSMQQNFSGIFNAVSGMMGGNAPSLENMEGKIQSTKKVIEEINIQFKNPDLTTFIPVCIPEFLSVYETERLIQQLTKLDIDVHNVIVNQIVYPEKDCSLCNARQKMQKKYLDQIADLYFDFHVTKLPLLKAEVRGVPSLKLFSELLIKPYDPSTPLVLPNQEN</sequence>
<protein>
    <recommendedName>
        <fullName evidence="1">ATPase ASNA1 homolog</fullName>
        <ecNumber evidence="1">3.6.-.-</ecNumber>
    </recommendedName>
    <alternativeName>
        <fullName evidence="1">Arsenical pump-driving ATPase homolog</fullName>
    </alternativeName>
    <alternativeName>
        <fullName evidence="1">Arsenite-stimulated ATPase</fullName>
    </alternativeName>
</protein>
<organism>
    <name type="scientific">Dictyostelium discoideum</name>
    <name type="common">Social amoeba</name>
    <dbReference type="NCBI Taxonomy" id="44689"/>
    <lineage>
        <taxon>Eukaryota</taxon>
        <taxon>Amoebozoa</taxon>
        <taxon>Evosea</taxon>
        <taxon>Eumycetozoa</taxon>
        <taxon>Dictyostelia</taxon>
        <taxon>Dictyosteliales</taxon>
        <taxon>Dictyosteliaceae</taxon>
        <taxon>Dictyostelium</taxon>
    </lineage>
</organism>
<reference key="1">
    <citation type="journal article" date="2002" name="Eukaryot. Cell">
        <title>Evolutionary analyses of ABC transporters of Dictyostelium discoideum.</title>
        <authorList>
            <person name="Anjard C."/>
            <person name="Loomis W.F."/>
        </authorList>
    </citation>
    <scope>NUCLEOTIDE SEQUENCE [GENOMIC DNA]</scope>
    <source>
        <strain>AX4</strain>
    </source>
</reference>
<reference key="2">
    <citation type="journal article" date="2005" name="Nature">
        <title>The genome of the social amoeba Dictyostelium discoideum.</title>
        <authorList>
            <person name="Eichinger L."/>
            <person name="Pachebat J.A."/>
            <person name="Gloeckner G."/>
            <person name="Rajandream M.A."/>
            <person name="Sucgang R."/>
            <person name="Berriman M."/>
            <person name="Song J."/>
            <person name="Olsen R."/>
            <person name="Szafranski K."/>
            <person name="Xu Q."/>
            <person name="Tunggal B."/>
            <person name="Kummerfeld S."/>
            <person name="Madera M."/>
            <person name="Konfortov B.A."/>
            <person name="Rivero F."/>
            <person name="Bankier A.T."/>
            <person name="Lehmann R."/>
            <person name="Hamlin N."/>
            <person name="Davies R."/>
            <person name="Gaudet P."/>
            <person name="Fey P."/>
            <person name="Pilcher K."/>
            <person name="Chen G."/>
            <person name="Saunders D."/>
            <person name="Sodergren E.J."/>
            <person name="Davis P."/>
            <person name="Kerhornou A."/>
            <person name="Nie X."/>
            <person name="Hall N."/>
            <person name="Anjard C."/>
            <person name="Hemphill L."/>
            <person name="Bason N."/>
            <person name="Farbrother P."/>
            <person name="Desany B."/>
            <person name="Just E."/>
            <person name="Morio T."/>
            <person name="Rost R."/>
            <person name="Churcher C.M."/>
            <person name="Cooper J."/>
            <person name="Haydock S."/>
            <person name="van Driessche N."/>
            <person name="Cronin A."/>
            <person name="Goodhead I."/>
            <person name="Muzny D.M."/>
            <person name="Mourier T."/>
            <person name="Pain A."/>
            <person name="Lu M."/>
            <person name="Harper D."/>
            <person name="Lindsay R."/>
            <person name="Hauser H."/>
            <person name="James K.D."/>
            <person name="Quiles M."/>
            <person name="Madan Babu M."/>
            <person name="Saito T."/>
            <person name="Buchrieser C."/>
            <person name="Wardroper A."/>
            <person name="Felder M."/>
            <person name="Thangavelu M."/>
            <person name="Johnson D."/>
            <person name="Knights A."/>
            <person name="Loulseged H."/>
            <person name="Mungall K.L."/>
            <person name="Oliver K."/>
            <person name="Price C."/>
            <person name="Quail M.A."/>
            <person name="Urushihara H."/>
            <person name="Hernandez J."/>
            <person name="Rabbinowitsch E."/>
            <person name="Steffen D."/>
            <person name="Sanders M."/>
            <person name="Ma J."/>
            <person name="Kohara Y."/>
            <person name="Sharp S."/>
            <person name="Simmonds M.N."/>
            <person name="Spiegler S."/>
            <person name="Tivey A."/>
            <person name="Sugano S."/>
            <person name="White B."/>
            <person name="Walker D."/>
            <person name="Woodward J.R."/>
            <person name="Winckler T."/>
            <person name="Tanaka Y."/>
            <person name="Shaulsky G."/>
            <person name="Schleicher M."/>
            <person name="Weinstock G.M."/>
            <person name="Rosenthal A."/>
            <person name="Cox E.C."/>
            <person name="Chisholm R.L."/>
            <person name="Gibbs R.A."/>
            <person name="Loomis W.F."/>
            <person name="Platzer M."/>
            <person name="Kay R.R."/>
            <person name="Williams J.G."/>
            <person name="Dear P.H."/>
            <person name="Noegel A.A."/>
            <person name="Barrell B.G."/>
            <person name="Kuspa A."/>
        </authorList>
    </citation>
    <scope>NUCLEOTIDE SEQUENCE [LARGE SCALE GENOMIC DNA]</scope>
    <source>
        <strain>AX4</strain>
    </source>
</reference>
<reference key="3">
    <citation type="journal article" date="2006" name="Mol. Cell. Proteomics">
        <title>Proteomics fingerprinting of phagosome maturation and evidence for the role of a Galpha during uptake.</title>
        <authorList>
            <person name="Gotthardt D."/>
            <person name="Blancheteau V."/>
            <person name="Bosserhoff A."/>
            <person name="Ruppert T."/>
            <person name="Delorenzi M."/>
            <person name="Soldati T."/>
        </authorList>
    </citation>
    <scope>IDENTIFICATION BY MASS SPECTROMETRY [LARGE SCALE ANALYSIS]</scope>
    <source>
        <strain>AX2</strain>
    </source>
</reference>
<gene>
    <name type="primary">arsA</name>
    <name type="ORF">DDB_G0293528</name>
</gene>
<evidence type="ECO:0000255" key="1">
    <source>
        <dbReference type="HAMAP-Rule" id="MF_03112"/>
    </source>
</evidence>
<feature type="chain" id="PRO_0000327425" description="ATPase ASNA1 homolog">
    <location>
        <begin position="1"/>
        <end position="329"/>
    </location>
</feature>
<feature type="active site" evidence="1">
    <location>
        <position position="56"/>
    </location>
</feature>
<feature type="binding site" evidence="1">
    <location>
        <begin position="27"/>
        <end position="34"/>
    </location>
    <ligand>
        <name>ATP</name>
        <dbReference type="ChEBI" id="CHEBI:30616"/>
    </ligand>
</feature>
<feature type="binding site" evidence="1">
    <location>
        <position position="227"/>
    </location>
    <ligand>
        <name>ATP</name>
        <dbReference type="ChEBI" id="CHEBI:30616"/>
    </ligand>
</feature>
<feature type="binding site" evidence="1">
    <location>
        <position position="254"/>
    </location>
    <ligand>
        <name>ATP</name>
        <dbReference type="ChEBI" id="CHEBI:30616"/>
    </ligand>
</feature>
<feature type="binding site" evidence="1">
    <location>
        <position position="263"/>
    </location>
    <ligand>
        <name>Zn(2+)</name>
        <dbReference type="ChEBI" id="CHEBI:29105"/>
        <note>ligand shared between dimeric partners</note>
    </ligand>
</feature>
<feature type="binding site" evidence="1">
    <location>
        <position position="266"/>
    </location>
    <ligand>
        <name>Zn(2+)</name>
        <dbReference type="ChEBI" id="CHEBI:29105"/>
        <note>ligand shared between dimeric partners</note>
    </ligand>
</feature>
<comment type="function">
    <text evidence="1">ATPase required for the post-translational delivery of tail-anchored (TA) proteins to the endoplasmic reticulum. Recognizes and selectively binds the transmembrane domain of TA proteins in the cytosol. This complex then targets to the endoplasmic reticulum by membrane-bound receptors, where the tail-anchored protein is released for insertion. This process is regulated by ATP binding and hydrolysis. ATP binding drives the homodimer towards the closed dimer state, facilitating recognition of newly synthesized TA membrane proteins. ATP hydrolysis is required for insertion. Subsequently, the homodimer reverts towards the open dimer state, lowering its affinity for the membrane-bound receptor, and returning it to the cytosol to initiate a new round of targeting.</text>
</comment>
<comment type="subunit">
    <text evidence="1">Homodimer.</text>
</comment>
<comment type="subcellular location">
    <subcellularLocation>
        <location evidence="1">Cytoplasm</location>
    </subcellularLocation>
    <subcellularLocation>
        <location evidence="1">Endoplasmic reticulum</location>
    </subcellularLocation>
</comment>
<comment type="similarity">
    <text evidence="1">Belongs to the arsA ATPase family.</text>
</comment>